<protein>
    <recommendedName>
        <fullName evidence="1">Leucine--tRNA ligase</fullName>
        <ecNumber evidence="1">6.1.1.4</ecNumber>
    </recommendedName>
    <alternativeName>
        <fullName evidence="1">Leucyl-tRNA synthetase</fullName>
        <shortName evidence="1">LeuRS</shortName>
    </alternativeName>
</protein>
<feature type="chain" id="PRO_1000009319" description="Leucine--tRNA ligase">
    <location>
        <begin position="1"/>
        <end position="820"/>
    </location>
</feature>
<feature type="short sequence motif" description="'HIGH' region">
    <location>
        <begin position="40"/>
        <end position="51"/>
    </location>
</feature>
<feature type="short sequence motif" description="'KMSKS' region">
    <location>
        <begin position="601"/>
        <end position="605"/>
    </location>
</feature>
<feature type="binding site" evidence="1">
    <location>
        <position position="604"/>
    </location>
    <ligand>
        <name>ATP</name>
        <dbReference type="ChEBI" id="CHEBI:30616"/>
    </ligand>
</feature>
<dbReference type="EC" id="6.1.1.4" evidence="1"/>
<dbReference type="EMBL" id="CR848038">
    <property type="protein sequence ID" value="CAH64033.1"/>
    <property type="molecule type" value="Genomic_DNA"/>
</dbReference>
<dbReference type="RefSeq" id="WP_011097182.1">
    <property type="nucleotide sequence ID" value="NC_004552.2"/>
</dbReference>
<dbReference type="SMR" id="Q5L5Q6"/>
<dbReference type="KEGG" id="cab:CAB585"/>
<dbReference type="eggNOG" id="COG0495">
    <property type="taxonomic scope" value="Bacteria"/>
</dbReference>
<dbReference type="HOGENOM" id="CLU_004427_0_0_0"/>
<dbReference type="OrthoDB" id="9810365at2"/>
<dbReference type="Proteomes" id="UP000001012">
    <property type="component" value="Chromosome"/>
</dbReference>
<dbReference type="GO" id="GO:0005829">
    <property type="term" value="C:cytosol"/>
    <property type="evidence" value="ECO:0007669"/>
    <property type="project" value="TreeGrafter"/>
</dbReference>
<dbReference type="GO" id="GO:0002161">
    <property type="term" value="F:aminoacyl-tRNA deacylase activity"/>
    <property type="evidence" value="ECO:0007669"/>
    <property type="project" value="InterPro"/>
</dbReference>
<dbReference type="GO" id="GO:0005524">
    <property type="term" value="F:ATP binding"/>
    <property type="evidence" value="ECO:0007669"/>
    <property type="project" value="UniProtKB-UniRule"/>
</dbReference>
<dbReference type="GO" id="GO:0004823">
    <property type="term" value="F:leucine-tRNA ligase activity"/>
    <property type="evidence" value="ECO:0007669"/>
    <property type="project" value="UniProtKB-UniRule"/>
</dbReference>
<dbReference type="GO" id="GO:0006429">
    <property type="term" value="P:leucyl-tRNA aminoacylation"/>
    <property type="evidence" value="ECO:0007669"/>
    <property type="project" value="UniProtKB-UniRule"/>
</dbReference>
<dbReference type="CDD" id="cd07958">
    <property type="entry name" value="Anticodon_Ia_Leu_BEm"/>
    <property type="match status" value="1"/>
</dbReference>
<dbReference type="CDD" id="cd00812">
    <property type="entry name" value="LeuRS_core"/>
    <property type="match status" value="1"/>
</dbReference>
<dbReference type="FunFam" id="1.10.730.10:FF:000002">
    <property type="entry name" value="Leucine--tRNA ligase"/>
    <property type="match status" value="1"/>
</dbReference>
<dbReference type="FunFam" id="3.40.50.620:FF:000056">
    <property type="entry name" value="Leucine--tRNA ligase"/>
    <property type="match status" value="1"/>
</dbReference>
<dbReference type="FunFam" id="3.40.50.620:FF:000077">
    <property type="entry name" value="Leucine--tRNA ligase"/>
    <property type="match status" value="1"/>
</dbReference>
<dbReference type="Gene3D" id="3.40.50.620">
    <property type="entry name" value="HUPs"/>
    <property type="match status" value="2"/>
</dbReference>
<dbReference type="Gene3D" id="1.10.730.10">
    <property type="entry name" value="Isoleucyl-tRNA Synthetase, Domain 1"/>
    <property type="match status" value="1"/>
</dbReference>
<dbReference type="HAMAP" id="MF_00049_B">
    <property type="entry name" value="Leu_tRNA_synth_B"/>
    <property type="match status" value="1"/>
</dbReference>
<dbReference type="InterPro" id="IPR001412">
    <property type="entry name" value="aa-tRNA-synth_I_CS"/>
</dbReference>
<dbReference type="InterPro" id="IPR002300">
    <property type="entry name" value="aa-tRNA-synth_Ia"/>
</dbReference>
<dbReference type="InterPro" id="IPR002302">
    <property type="entry name" value="Leu-tRNA-ligase"/>
</dbReference>
<dbReference type="InterPro" id="IPR025709">
    <property type="entry name" value="Leu_tRNA-synth_edit"/>
</dbReference>
<dbReference type="InterPro" id="IPR013155">
    <property type="entry name" value="M/V/L/I-tRNA-synth_anticd-bd"/>
</dbReference>
<dbReference type="InterPro" id="IPR015413">
    <property type="entry name" value="Methionyl/Leucyl_tRNA_Synth"/>
</dbReference>
<dbReference type="InterPro" id="IPR014729">
    <property type="entry name" value="Rossmann-like_a/b/a_fold"/>
</dbReference>
<dbReference type="InterPro" id="IPR009080">
    <property type="entry name" value="tRNAsynth_Ia_anticodon-bd"/>
</dbReference>
<dbReference type="InterPro" id="IPR009008">
    <property type="entry name" value="Val/Leu/Ile-tRNA-synth_edit"/>
</dbReference>
<dbReference type="NCBIfam" id="TIGR00396">
    <property type="entry name" value="leuS_bact"/>
    <property type="match status" value="1"/>
</dbReference>
<dbReference type="PANTHER" id="PTHR43740:SF2">
    <property type="entry name" value="LEUCINE--TRNA LIGASE, MITOCHONDRIAL"/>
    <property type="match status" value="1"/>
</dbReference>
<dbReference type="PANTHER" id="PTHR43740">
    <property type="entry name" value="LEUCYL-TRNA SYNTHETASE"/>
    <property type="match status" value="1"/>
</dbReference>
<dbReference type="Pfam" id="PF08264">
    <property type="entry name" value="Anticodon_1"/>
    <property type="match status" value="1"/>
</dbReference>
<dbReference type="Pfam" id="PF00133">
    <property type="entry name" value="tRNA-synt_1"/>
    <property type="match status" value="1"/>
</dbReference>
<dbReference type="Pfam" id="PF13603">
    <property type="entry name" value="tRNA-synt_1_2"/>
    <property type="match status" value="1"/>
</dbReference>
<dbReference type="Pfam" id="PF09334">
    <property type="entry name" value="tRNA-synt_1g"/>
    <property type="match status" value="1"/>
</dbReference>
<dbReference type="PRINTS" id="PR00985">
    <property type="entry name" value="TRNASYNTHLEU"/>
</dbReference>
<dbReference type="SUPFAM" id="SSF47323">
    <property type="entry name" value="Anticodon-binding domain of a subclass of class I aminoacyl-tRNA synthetases"/>
    <property type="match status" value="1"/>
</dbReference>
<dbReference type="SUPFAM" id="SSF52374">
    <property type="entry name" value="Nucleotidylyl transferase"/>
    <property type="match status" value="1"/>
</dbReference>
<dbReference type="SUPFAM" id="SSF50677">
    <property type="entry name" value="ValRS/IleRS/LeuRS editing domain"/>
    <property type="match status" value="1"/>
</dbReference>
<dbReference type="PROSITE" id="PS00178">
    <property type="entry name" value="AA_TRNA_LIGASE_I"/>
    <property type="match status" value="1"/>
</dbReference>
<organism>
    <name type="scientific">Chlamydia abortus (strain DSM 27085 / S26/3)</name>
    <name type="common">Chlamydophila abortus</name>
    <dbReference type="NCBI Taxonomy" id="218497"/>
    <lineage>
        <taxon>Bacteria</taxon>
        <taxon>Pseudomonadati</taxon>
        <taxon>Chlamydiota</taxon>
        <taxon>Chlamydiia</taxon>
        <taxon>Chlamydiales</taxon>
        <taxon>Chlamydiaceae</taxon>
        <taxon>Chlamydia/Chlamydophila group</taxon>
        <taxon>Chlamydia</taxon>
    </lineage>
</organism>
<reference key="1">
    <citation type="journal article" date="2005" name="Genome Res.">
        <title>The Chlamydophila abortus genome sequence reveals an array of variable proteins that contribute to interspecies variation.</title>
        <authorList>
            <person name="Thomson N.R."/>
            <person name="Yeats C."/>
            <person name="Bell K."/>
            <person name="Holden M.T.G."/>
            <person name="Bentley S.D."/>
            <person name="Livingstone M."/>
            <person name="Cerdeno-Tarraga A.-M."/>
            <person name="Harris B."/>
            <person name="Doggett J."/>
            <person name="Ormond D."/>
            <person name="Mungall K."/>
            <person name="Clarke K."/>
            <person name="Feltwell T."/>
            <person name="Hance Z."/>
            <person name="Sanders M."/>
            <person name="Quail M.A."/>
            <person name="Price C."/>
            <person name="Barrell B.G."/>
            <person name="Parkhill J."/>
            <person name="Longbottom D."/>
        </authorList>
    </citation>
    <scope>NUCLEOTIDE SEQUENCE [LARGE SCALE GENOMIC DNA]</scope>
    <source>
        <strain>DSM 27085 / S26/3</strain>
    </source>
</reference>
<gene>
    <name evidence="1" type="primary">leuS</name>
    <name type="ordered locus">CAB585</name>
</gene>
<comment type="catalytic activity">
    <reaction evidence="1">
        <text>tRNA(Leu) + L-leucine + ATP = L-leucyl-tRNA(Leu) + AMP + diphosphate</text>
        <dbReference type="Rhea" id="RHEA:11688"/>
        <dbReference type="Rhea" id="RHEA-COMP:9613"/>
        <dbReference type="Rhea" id="RHEA-COMP:9622"/>
        <dbReference type="ChEBI" id="CHEBI:30616"/>
        <dbReference type="ChEBI" id="CHEBI:33019"/>
        <dbReference type="ChEBI" id="CHEBI:57427"/>
        <dbReference type="ChEBI" id="CHEBI:78442"/>
        <dbReference type="ChEBI" id="CHEBI:78494"/>
        <dbReference type="ChEBI" id="CHEBI:456215"/>
        <dbReference type="EC" id="6.1.1.4"/>
    </reaction>
</comment>
<comment type="subcellular location">
    <subcellularLocation>
        <location evidence="1">Cytoplasm</location>
    </subcellularLocation>
</comment>
<comment type="similarity">
    <text evidence="1">Belongs to the class-I aminoacyl-tRNA synthetase family.</text>
</comment>
<evidence type="ECO:0000255" key="1">
    <source>
        <dbReference type="HAMAP-Rule" id="MF_00049"/>
    </source>
</evidence>
<name>SYL_CHLAB</name>
<proteinExistence type="inferred from homology"/>
<sequence>MRYDPSLIEKKWQQFWKEHKSFKADETADKPKYYVLDMFPYPSGAGLHVGHLIGYTATDIVARYKRAKGFSVLHPMGWDSFGLPAEQYAVRTGTHPRETTKKNIENFRKQLSAMGFSYDEAREFATSDPEYYRWTQKLFLFLYEKGLAYMADMAVNYCEELGTVLANEEVENGLSIEGGYPVERRMLRQWILRITAYADQLLQGLEDLDWPENVKQLQRNWIGKSEGALLRFVVDKDKCLEVFTTRPDTLCGVSFLVMAPEHPEIQQLVSEEQRSAVESYIRCAQSKSERERISETKVKSGVFTGAYAKHAITGAALPIWVSDYVIMGYGSGVVMGVPAHDERDREFANAFALPIDEVLDENEHCINSNHGDFLLNGLQGKEASDYVIAYLQKRNLGEAKVMYKLHDWLFSRQRYWGEPIPIIHFEDGTCRPLEDDELPLLPPEIQDYRPKGFGQGPLAKVKEWVDIHDVKTQRPGRRETHTMPQWAGSCWYYLRFCDAHNSQAPWSHENERYWMPVDLYIGGAEHAVLHLLYSRFWHRVFYEAGLVSTPEPFKKLINQGLVLATSYRIPGKGYVHPEDAREDNGKWTTASGEELEVRQEKMSKSKLNGVDPQILIDEFGADALRMYAMFSGPLDKNKLWCNQGVSGCRRFLNRFYELATSSAVQDIDDPKGMALAHRLVHKVGEDIEKMSLNTIPSSFMEFINEFAKLDTYSKSALSMVVRALAPIAPHISEELWTVLGYAPGIDNAGWPEVDPKYLEDTSVTFVIQVNGKLRARLDMDKNTSQEDILSAARESVAKYLEDKEIKKEVFVPNRLVNFVL</sequence>
<accession>Q5L5Q6</accession>
<keyword id="KW-0030">Aminoacyl-tRNA synthetase</keyword>
<keyword id="KW-0067">ATP-binding</keyword>
<keyword id="KW-0963">Cytoplasm</keyword>
<keyword id="KW-0436">Ligase</keyword>
<keyword id="KW-0547">Nucleotide-binding</keyword>
<keyword id="KW-0648">Protein biosynthesis</keyword>